<accession>Q8IMZ5</accession>
<sequence>MDFTSDYAHRRMVKFLTIILIGFMTVFGLLANRYRAGRRERFRFSKANLAFASLWAIAFSLVYGRQIYKEYQEGQINLKDATTLYSYMNITVAVINYVSQMIISDHVAKVLSKVPFFDTLKEFRLDSRSLYISIVLALVKTVAFPLTIEVAFILQQRRQHPEMSLIWTLYRLFPLIISNFLNNCYFGAMVVVKEILYALNRRLEAQLQEVNLLQRKDQLKLYTKYYRMQRFCALADELDQLAYRYRLIYVHSGKYLTPMSLSMILSLICHLLGITVGFYSLYYAIADTLIMGKPYDGLGSLINLVFLSISLAEITLLTHLCNHLLVATRRSAVILQEMNLQHADSRYRQAVHGFTLLVTVTKYQIKPLGLYELDMRLISNVFSAVASFLLILVQADLSQRFKMQ</sequence>
<feature type="chain" id="PRO_0000216544" description="Putative gustatory receptor 94a">
    <location>
        <begin position="1"/>
        <end position="404"/>
    </location>
</feature>
<feature type="topological domain" description="Cytoplasmic" evidence="1">
    <location>
        <begin position="1"/>
        <end position="11"/>
    </location>
</feature>
<feature type="transmembrane region" description="Helical; Name=1" evidence="2">
    <location>
        <begin position="12"/>
        <end position="32"/>
    </location>
</feature>
<feature type="topological domain" description="Extracellular" evidence="1">
    <location>
        <begin position="33"/>
        <end position="43"/>
    </location>
</feature>
<feature type="transmembrane region" description="Helical; Name=2" evidence="2">
    <location>
        <begin position="44"/>
        <end position="64"/>
    </location>
</feature>
<feature type="topological domain" description="Cytoplasmic" evidence="1">
    <location>
        <begin position="65"/>
        <end position="133"/>
    </location>
</feature>
<feature type="transmembrane region" description="Helical; Name=3" evidence="2">
    <location>
        <begin position="134"/>
        <end position="154"/>
    </location>
</feature>
<feature type="topological domain" description="Extracellular" evidence="1">
    <location>
        <begin position="155"/>
        <end position="171"/>
    </location>
</feature>
<feature type="transmembrane region" description="Helical; Name=4" evidence="2">
    <location>
        <begin position="172"/>
        <end position="192"/>
    </location>
</feature>
<feature type="topological domain" description="Cytoplasmic" evidence="1">
    <location>
        <begin position="193"/>
        <end position="260"/>
    </location>
</feature>
<feature type="transmembrane region" description="Helical; Name=5" evidence="2">
    <location>
        <begin position="261"/>
        <end position="281"/>
    </location>
</feature>
<feature type="topological domain" description="Extracellular" evidence="1">
    <location>
        <begin position="282"/>
        <end position="296"/>
    </location>
</feature>
<feature type="transmembrane region" description="Helical; Name=6" evidence="2">
    <location>
        <begin position="297"/>
        <end position="317"/>
    </location>
</feature>
<feature type="topological domain" description="Cytoplasmic" evidence="1">
    <location>
        <begin position="318"/>
        <end position="376"/>
    </location>
</feature>
<feature type="transmembrane region" description="Helical; Name=7" evidence="2">
    <location>
        <begin position="377"/>
        <end position="397"/>
    </location>
</feature>
<feature type="topological domain" description="Extracellular" evidence="1">
    <location>
        <begin position="398"/>
        <end position="404"/>
    </location>
</feature>
<dbReference type="EMBL" id="AE014297">
    <property type="protein sequence ID" value="AAN13924.1"/>
    <property type="molecule type" value="Genomic_DNA"/>
</dbReference>
<dbReference type="RefSeq" id="NP_732816.1">
    <property type="nucleotide sequence ID" value="NM_170046.1"/>
</dbReference>
<dbReference type="SMR" id="Q8IMZ5"/>
<dbReference type="FunCoup" id="Q8IMZ5">
    <property type="interactions" value="8"/>
</dbReference>
<dbReference type="STRING" id="7227.FBpp0083739"/>
<dbReference type="PaxDb" id="7227-FBpp0083739"/>
<dbReference type="DNASU" id="117339"/>
<dbReference type="EnsemblMetazoa" id="FBtr0084346">
    <property type="protein sequence ID" value="FBpp0083739"/>
    <property type="gene ID" value="FBgn0041225"/>
</dbReference>
<dbReference type="GeneID" id="117339"/>
<dbReference type="KEGG" id="dme:Dmel_CG31280"/>
<dbReference type="AGR" id="FB:FBgn0041225"/>
<dbReference type="CTD" id="117339"/>
<dbReference type="FlyBase" id="FBgn0041225">
    <property type="gene designation" value="Gr94a"/>
</dbReference>
<dbReference type="VEuPathDB" id="VectorBase:FBgn0041225"/>
<dbReference type="eggNOG" id="ENOG502TD1C">
    <property type="taxonomic scope" value="Eukaryota"/>
</dbReference>
<dbReference type="GeneTree" id="ENSGT00940000166130"/>
<dbReference type="HOGENOM" id="CLU_720168_0_0_1"/>
<dbReference type="InParanoid" id="Q8IMZ5"/>
<dbReference type="OMA" id="CYFGAMI"/>
<dbReference type="OrthoDB" id="6366728at2759"/>
<dbReference type="PhylomeDB" id="Q8IMZ5"/>
<dbReference type="BioGRID-ORCS" id="117339">
    <property type="hits" value="0 hits in 1 CRISPR screen"/>
</dbReference>
<dbReference type="GenomeRNAi" id="117339"/>
<dbReference type="PRO" id="PR:Q8IMZ5"/>
<dbReference type="Proteomes" id="UP000000803">
    <property type="component" value="Chromosome 3R"/>
</dbReference>
<dbReference type="Bgee" id="FBgn0041225">
    <property type="expression patterns" value="Expressed in saliva-secreting gland and 3 other cell types or tissues"/>
</dbReference>
<dbReference type="ExpressionAtlas" id="Q8IMZ5">
    <property type="expression patterns" value="baseline and differential"/>
</dbReference>
<dbReference type="GO" id="GO:0030424">
    <property type="term" value="C:axon"/>
    <property type="evidence" value="ECO:0000318"/>
    <property type="project" value="GO_Central"/>
</dbReference>
<dbReference type="GO" id="GO:0030425">
    <property type="term" value="C:dendrite"/>
    <property type="evidence" value="ECO:0000318"/>
    <property type="project" value="GO_Central"/>
</dbReference>
<dbReference type="GO" id="GO:0016020">
    <property type="term" value="C:membrane"/>
    <property type="evidence" value="ECO:0000303"/>
    <property type="project" value="UniProtKB"/>
</dbReference>
<dbReference type="GO" id="GO:0043025">
    <property type="term" value="C:neuronal cell body"/>
    <property type="evidence" value="ECO:0000318"/>
    <property type="project" value="GO_Central"/>
</dbReference>
<dbReference type="GO" id="GO:0005886">
    <property type="term" value="C:plasma membrane"/>
    <property type="evidence" value="ECO:0000250"/>
    <property type="project" value="FlyBase"/>
</dbReference>
<dbReference type="GO" id="GO:0015276">
    <property type="term" value="F:ligand-gated monoatomic ion channel activity"/>
    <property type="evidence" value="ECO:0000250"/>
    <property type="project" value="FlyBase"/>
</dbReference>
<dbReference type="GO" id="GO:0034220">
    <property type="term" value="P:monoatomic ion transmembrane transport"/>
    <property type="evidence" value="ECO:0000250"/>
    <property type="project" value="FlyBase"/>
</dbReference>
<dbReference type="GO" id="GO:0050909">
    <property type="term" value="P:sensory perception of taste"/>
    <property type="evidence" value="ECO:0007669"/>
    <property type="project" value="InterPro"/>
</dbReference>
<dbReference type="GO" id="GO:0007165">
    <property type="term" value="P:signal transduction"/>
    <property type="evidence" value="ECO:0007669"/>
    <property type="project" value="UniProtKB-KW"/>
</dbReference>
<dbReference type="InterPro" id="IPR013604">
    <property type="entry name" value="7TM_chemorcpt"/>
</dbReference>
<dbReference type="Pfam" id="PF08395">
    <property type="entry name" value="7tm_7"/>
    <property type="match status" value="1"/>
</dbReference>
<protein>
    <recommendedName>
        <fullName>Putative gustatory receptor 94a</fullName>
    </recommendedName>
</protein>
<proteinExistence type="evidence at transcript level"/>
<reference evidence="5" key="1">
    <citation type="journal article" date="2000" name="Science">
        <title>The genome sequence of Drosophila melanogaster.</title>
        <authorList>
            <person name="Adams M.D."/>
            <person name="Celniker S.E."/>
            <person name="Holt R.A."/>
            <person name="Evans C.A."/>
            <person name="Gocayne J.D."/>
            <person name="Amanatides P.G."/>
            <person name="Scherer S.E."/>
            <person name="Li P.W."/>
            <person name="Hoskins R.A."/>
            <person name="Galle R.F."/>
            <person name="George R.A."/>
            <person name="Lewis S.E."/>
            <person name="Richards S."/>
            <person name="Ashburner M."/>
            <person name="Henderson S.N."/>
            <person name="Sutton G.G."/>
            <person name="Wortman J.R."/>
            <person name="Yandell M.D."/>
            <person name="Zhang Q."/>
            <person name="Chen L.X."/>
            <person name="Brandon R.C."/>
            <person name="Rogers Y.-H.C."/>
            <person name="Blazej R.G."/>
            <person name="Champe M."/>
            <person name="Pfeiffer B.D."/>
            <person name="Wan K.H."/>
            <person name="Doyle C."/>
            <person name="Baxter E.G."/>
            <person name="Helt G."/>
            <person name="Nelson C.R."/>
            <person name="Miklos G.L.G."/>
            <person name="Abril J.F."/>
            <person name="Agbayani A."/>
            <person name="An H.-J."/>
            <person name="Andrews-Pfannkoch C."/>
            <person name="Baldwin D."/>
            <person name="Ballew R.M."/>
            <person name="Basu A."/>
            <person name="Baxendale J."/>
            <person name="Bayraktaroglu L."/>
            <person name="Beasley E.M."/>
            <person name="Beeson K.Y."/>
            <person name="Benos P.V."/>
            <person name="Berman B.P."/>
            <person name="Bhandari D."/>
            <person name="Bolshakov S."/>
            <person name="Borkova D."/>
            <person name="Botchan M.R."/>
            <person name="Bouck J."/>
            <person name="Brokstein P."/>
            <person name="Brottier P."/>
            <person name="Burtis K.C."/>
            <person name="Busam D.A."/>
            <person name="Butler H."/>
            <person name="Cadieu E."/>
            <person name="Center A."/>
            <person name="Chandra I."/>
            <person name="Cherry J.M."/>
            <person name="Cawley S."/>
            <person name="Dahlke C."/>
            <person name="Davenport L.B."/>
            <person name="Davies P."/>
            <person name="de Pablos B."/>
            <person name="Delcher A."/>
            <person name="Deng Z."/>
            <person name="Mays A.D."/>
            <person name="Dew I."/>
            <person name="Dietz S.M."/>
            <person name="Dodson K."/>
            <person name="Doup L.E."/>
            <person name="Downes M."/>
            <person name="Dugan-Rocha S."/>
            <person name="Dunkov B.C."/>
            <person name="Dunn P."/>
            <person name="Durbin K.J."/>
            <person name="Evangelista C.C."/>
            <person name="Ferraz C."/>
            <person name="Ferriera S."/>
            <person name="Fleischmann W."/>
            <person name="Fosler C."/>
            <person name="Gabrielian A.E."/>
            <person name="Garg N.S."/>
            <person name="Gelbart W.M."/>
            <person name="Glasser K."/>
            <person name="Glodek A."/>
            <person name="Gong F."/>
            <person name="Gorrell J.H."/>
            <person name="Gu Z."/>
            <person name="Guan P."/>
            <person name="Harris M."/>
            <person name="Harris N.L."/>
            <person name="Harvey D.A."/>
            <person name="Heiman T.J."/>
            <person name="Hernandez J.R."/>
            <person name="Houck J."/>
            <person name="Hostin D."/>
            <person name="Houston K.A."/>
            <person name="Howland T.J."/>
            <person name="Wei M.-H."/>
            <person name="Ibegwam C."/>
            <person name="Jalali M."/>
            <person name="Kalush F."/>
            <person name="Karpen G.H."/>
            <person name="Ke Z."/>
            <person name="Kennison J.A."/>
            <person name="Ketchum K.A."/>
            <person name="Kimmel B.E."/>
            <person name="Kodira C.D."/>
            <person name="Kraft C.L."/>
            <person name="Kravitz S."/>
            <person name="Kulp D."/>
            <person name="Lai Z."/>
            <person name="Lasko P."/>
            <person name="Lei Y."/>
            <person name="Levitsky A.A."/>
            <person name="Li J.H."/>
            <person name="Li Z."/>
            <person name="Liang Y."/>
            <person name="Lin X."/>
            <person name="Liu X."/>
            <person name="Mattei B."/>
            <person name="McIntosh T.C."/>
            <person name="McLeod M.P."/>
            <person name="McPherson D."/>
            <person name="Merkulov G."/>
            <person name="Milshina N.V."/>
            <person name="Mobarry C."/>
            <person name="Morris J."/>
            <person name="Moshrefi A."/>
            <person name="Mount S.M."/>
            <person name="Moy M."/>
            <person name="Murphy B."/>
            <person name="Murphy L."/>
            <person name="Muzny D.M."/>
            <person name="Nelson D.L."/>
            <person name="Nelson D.R."/>
            <person name="Nelson K.A."/>
            <person name="Nixon K."/>
            <person name="Nusskern D.R."/>
            <person name="Pacleb J.M."/>
            <person name="Palazzolo M."/>
            <person name="Pittman G.S."/>
            <person name="Pan S."/>
            <person name="Pollard J."/>
            <person name="Puri V."/>
            <person name="Reese M.G."/>
            <person name="Reinert K."/>
            <person name="Remington K."/>
            <person name="Saunders R.D.C."/>
            <person name="Scheeler F."/>
            <person name="Shen H."/>
            <person name="Shue B.C."/>
            <person name="Siden-Kiamos I."/>
            <person name="Simpson M."/>
            <person name="Skupski M.P."/>
            <person name="Smith T.J."/>
            <person name="Spier E."/>
            <person name="Spradling A.C."/>
            <person name="Stapleton M."/>
            <person name="Strong R."/>
            <person name="Sun E."/>
            <person name="Svirskas R."/>
            <person name="Tector C."/>
            <person name="Turner R."/>
            <person name="Venter E."/>
            <person name="Wang A.H."/>
            <person name="Wang X."/>
            <person name="Wang Z.-Y."/>
            <person name="Wassarman D.A."/>
            <person name="Weinstock G.M."/>
            <person name="Weissenbach J."/>
            <person name="Williams S.M."/>
            <person name="Woodage T."/>
            <person name="Worley K.C."/>
            <person name="Wu D."/>
            <person name="Yang S."/>
            <person name="Yao Q.A."/>
            <person name="Ye J."/>
            <person name="Yeh R.-F."/>
            <person name="Zaveri J.S."/>
            <person name="Zhan M."/>
            <person name="Zhang G."/>
            <person name="Zhao Q."/>
            <person name="Zheng L."/>
            <person name="Zheng X.H."/>
            <person name="Zhong F.N."/>
            <person name="Zhong W."/>
            <person name="Zhou X."/>
            <person name="Zhu S.C."/>
            <person name="Zhu X."/>
            <person name="Smith H.O."/>
            <person name="Gibbs R.A."/>
            <person name="Myers E.W."/>
            <person name="Rubin G.M."/>
            <person name="Venter J.C."/>
        </authorList>
    </citation>
    <scope>NUCLEOTIDE SEQUENCE [LARGE SCALE GENOMIC DNA]</scope>
    <source>
        <strain evidence="3">Berkeley</strain>
    </source>
</reference>
<reference evidence="5" key="2">
    <citation type="journal article" date="2002" name="Genome Biol.">
        <title>Annotation of the Drosophila melanogaster euchromatic genome: a systematic review.</title>
        <authorList>
            <person name="Misra S."/>
            <person name="Crosby M.A."/>
            <person name="Mungall C.J."/>
            <person name="Matthews B.B."/>
            <person name="Campbell K.S."/>
            <person name="Hradecky P."/>
            <person name="Huang Y."/>
            <person name="Kaminker J.S."/>
            <person name="Millburn G.H."/>
            <person name="Prochnik S.E."/>
            <person name="Smith C.D."/>
            <person name="Tupy J.L."/>
            <person name="Whitfield E.J."/>
            <person name="Bayraktaroglu L."/>
            <person name="Berman B.P."/>
            <person name="Bettencourt B.R."/>
            <person name="Celniker S.E."/>
            <person name="de Grey A.D.N.J."/>
            <person name="Drysdale R.A."/>
            <person name="Harris N.L."/>
            <person name="Richter J."/>
            <person name="Russo S."/>
            <person name="Schroeder A.J."/>
            <person name="Shu S.Q."/>
            <person name="Stapleton M."/>
            <person name="Yamada C."/>
            <person name="Ashburner M."/>
            <person name="Gelbart W.M."/>
            <person name="Rubin G.M."/>
            <person name="Lewis S.E."/>
        </authorList>
    </citation>
    <scope>GENOME REANNOTATION</scope>
    <source>
        <strain>Berkeley</strain>
    </source>
</reference>
<reference evidence="5" key="3">
    <citation type="journal article" date="2000" name="Science">
        <title>Candidate taste receptors in Drosophila.</title>
        <authorList>
            <person name="Clyne P.J."/>
            <person name="Warr C.G."/>
            <person name="Carlson J.R."/>
        </authorList>
    </citation>
    <scope>IDENTIFICATION</scope>
</reference>
<reference key="4">
    <citation type="journal article" date="2011" name="J. Neurosci.">
        <title>Molecular and cellular organization of the taste system in the Drosophila larva.</title>
        <authorList>
            <person name="Kwon J.Y."/>
            <person name="Dahanukar A."/>
            <person name="Weiss L.A."/>
            <person name="Carlson J.R."/>
        </authorList>
    </citation>
    <scope>TISSUE SPECIFICITY</scope>
</reference>
<organism evidence="6">
    <name type="scientific">Drosophila melanogaster</name>
    <name type="common">Fruit fly</name>
    <dbReference type="NCBI Taxonomy" id="7227"/>
    <lineage>
        <taxon>Eukaryota</taxon>
        <taxon>Metazoa</taxon>
        <taxon>Ecdysozoa</taxon>
        <taxon>Arthropoda</taxon>
        <taxon>Hexapoda</taxon>
        <taxon>Insecta</taxon>
        <taxon>Pterygota</taxon>
        <taxon>Neoptera</taxon>
        <taxon>Endopterygota</taxon>
        <taxon>Diptera</taxon>
        <taxon>Brachycera</taxon>
        <taxon>Muscomorpha</taxon>
        <taxon>Ephydroidea</taxon>
        <taxon>Drosophilidae</taxon>
        <taxon>Drosophila</taxon>
        <taxon>Sophophora</taxon>
    </lineage>
</organism>
<name>GR94A_DROME</name>
<comment type="function">
    <text evidence="1">Probable gustatory receptor which mediates acceptance or avoidance behavior, depending on its substrates.</text>
</comment>
<comment type="subcellular location">
    <subcellularLocation>
        <location evidence="1">Cell membrane</location>
        <topology evidence="1">Multi-pass membrane protein</topology>
    </subcellularLocation>
</comment>
<comment type="tissue specificity">
    <text evidence="4">In larvae, is expressed in neurons of the terminal external chemosensory organ.</text>
</comment>
<comment type="similarity">
    <text evidence="5">Belongs to the insect chemoreceptor superfamily. Gustatory receptor (GR) family. Gr22e subfamily.</text>
</comment>
<keyword id="KW-1003">Cell membrane</keyword>
<keyword id="KW-0472">Membrane</keyword>
<keyword id="KW-0675">Receptor</keyword>
<keyword id="KW-1185">Reference proteome</keyword>
<keyword id="KW-0807">Transducer</keyword>
<keyword id="KW-0812">Transmembrane</keyword>
<keyword id="KW-1133">Transmembrane helix</keyword>
<gene>
    <name type="primary">Gr94a</name>
    <name type="synonym">GR94E.1</name>
    <name type="ORF">CG31280</name>
</gene>
<evidence type="ECO:0000250" key="1"/>
<evidence type="ECO:0000255" key="2"/>
<evidence type="ECO:0000269" key="3">
    <source>
    </source>
</evidence>
<evidence type="ECO:0000269" key="4">
    <source>
    </source>
</evidence>
<evidence type="ECO:0000305" key="5"/>
<evidence type="ECO:0000312" key="6">
    <source>
        <dbReference type="EMBL" id="AAN13924.1"/>
    </source>
</evidence>